<gene>
    <name evidence="1" type="primary">gcvT</name>
    <name type="ordered locus">STH1922</name>
</gene>
<comment type="function">
    <text evidence="1">The glycine cleavage system catalyzes the degradation of glycine.</text>
</comment>
<comment type="catalytic activity">
    <reaction evidence="1">
        <text>N(6)-[(R)-S(8)-aminomethyldihydrolipoyl]-L-lysyl-[protein] + (6S)-5,6,7,8-tetrahydrofolate = N(6)-[(R)-dihydrolipoyl]-L-lysyl-[protein] + (6R)-5,10-methylene-5,6,7,8-tetrahydrofolate + NH4(+)</text>
        <dbReference type="Rhea" id="RHEA:16945"/>
        <dbReference type="Rhea" id="RHEA-COMP:10475"/>
        <dbReference type="Rhea" id="RHEA-COMP:10492"/>
        <dbReference type="ChEBI" id="CHEBI:15636"/>
        <dbReference type="ChEBI" id="CHEBI:28938"/>
        <dbReference type="ChEBI" id="CHEBI:57453"/>
        <dbReference type="ChEBI" id="CHEBI:83100"/>
        <dbReference type="ChEBI" id="CHEBI:83143"/>
        <dbReference type="EC" id="2.1.2.10"/>
    </reaction>
</comment>
<comment type="subunit">
    <text evidence="1">The glycine cleavage system is composed of four proteins: P, T, L and H.</text>
</comment>
<comment type="similarity">
    <text evidence="1">Belongs to the GcvT family.</text>
</comment>
<evidence type="ECO:0000255" key="1">
    <source>
        <dbReference type="HAMAP-Rule" id="MF_00259"/>
    </source>
</evidence>
<proteinExistence type="inferred from homology"/>
<keyword id="KW-0032">Aminotransferase</keyword>
<keyword id="KW-1185">Reference proteome</keyword>
<keyword id="KW-0808">Transferase</keyword>
<reference key="1">
    <citation type="journal article" date="2004" name="Nucleic Acids Res.">
        <title>Genome sequence of Symbiobacterium thermophilum, an uncultivable bacterium that depends on microbial commensalism.</title>
        <authorList>
            <person name="Ueda K."/>
            <person name="Yamashita A."/>
            <person name="Ishikawa J."/>
            <person name="Shimada M."/>
            <person name="Watsuji T."/>
            <person name="Morimura K."/>
            <person name="Ikeda H."/>
            <person name="Hattori M."/>
            <person name="Beppu T."/>
        </authorList>
    </citation>
    <scope>NUCLEOTIDE SEQUENCE [LARGE SCALE GENOMIC DNA]</scope>
    <source>
        <strain>DSM 24528 / JCM 14929 / IAM 14863 / T</strain>
    </source>
</reference>
<accession>Q67N36</accession>
<feature type="chain" id="PRO_0000122605" description="Aminomethyltransferase">
    <location>
        <begin position="1"/>
        <end position="375"/>
    </location>
</feature>
<protein>
    <recommendedName>
        <fullName evidence="1">Aminomethyltransferase</fullName>
        <ecNumber evidence="1">2.1.2.10</ecNumber>
    </recommendedName>
    <alternativeName>
        <fullName evidence="1">Glycine cleavage system T protein</fullName>
    </alternativeName>
</protein>
<organism>
    <name type="scientific">Symbiobacterium thermophilum (strain DSM 24528 / JCM 14929 / IAM 14863 / T)</name>
    <dbReference type="NCBI Taxonomy" id="292459"/>
    <lineage>
        <taxon>Bacteria</taxon>
        <taxon>Bacillati</taxon>
        <taxon>Bacillota</taxon>
        <taxon>Clostridia</taxon>
        <taxon>Eubacteriales</taxon>
        <taxon>Symbiobacteriaceae</taxon>
        <taxon>Symbiobacterium</taxon>
    </lineage>
</organism>
<name>GCST_SYMTH</name>
<sequence>MNESLKRTPLYELHLKLGARMVPFGGWEMPVQYSSVIEEHRAVREAAGLFDVSHMGEFEVRGPQALDLIQLVSTNDAAKLAVGRVQYALMCYENGTVVDDILIYRLDEHRYWLVVNAGNTQKDWEWINTARERAGLHNLELIDRSAEIALLALQGPKAEEILQPLATGVVLSQLEPFSLAKNVTVSGVPTLVLSRTGYTGEDGFEIYVKAEDVAALWEALLEAGDEQGLLPCGLGARDTLRFEAKLPLYGHEISDQHNPLEAGLGFAVKLKKGVDFIGRDALARIKEQGPTRKLVGIEMIDRGVPRQGYPVAVGGEVVGEVTTGSFSPTLEKNIALAYVPVAHSAVGTEVEVIIRGRALKARVVETPFYRSPHRR</sequence>
<dbReference type="EC" id="2.1.2.10" evidence="1"/>
<dbReference type="EMBL" id="AP006840">
    <property type="protein sequence ID" value="BAD40907.1"/>
    <property type="molecule type" value="Genomic_DNA"/>
</dbReference>
<dbReference type="RefSeq" id="WP_011196049.1">
    <property type="nucleotide sequence ID" value="NC_006177.1"/>
</dbReference>
<dbReference type="SMR" id="Q67N36"/>
<dbReference type="STRING" id="292459.STH1922"/>
<dbReference type="KEGG" id="sth:STH1922"/>
<dbReference type="eggNOG" id="COG0404">
    <property type="taxonomic scope" value="Bacteria"/>
</dbReference>
<dbReference type="HOGENOM" id="CLU_007884_10_2_9"/>
<dbReference type="OrthoDB" id="9774591at2"/>
<dbReference type="Proteomes" id="UP000000417">
    <property type="component" value="Chromosome"/>
</dbReference>
<dbReference type="GO" id="GO:0005829">
    <property type="term" value="C:cytosol"/>
    <property type="evidence" value="ECO:0007669"/>
    <property type="project" value="TreeGrafter"/>
</dbReference>
<dbReference type="GO" id="GO:0005960">
    <property type="term" value="C:glycine cleavage complex"/>
    <property type="evidence" value="ECO:0007669"/>
    <property type="project" value="InterPro"/>
</dbReference>
<dbReference type="GO" id="GO:0004047">
    <property type="term" value="F:aminomethyltransferase activity"/>
    <property type="evidence" value="ECO:0007669"/>
    <property type="project" value="UniProtKB-UniRule"/>
</dbReference>
<dbReference type="GO" id="GO:0008483">
    <property type="term" value="F:transaminase activity"/>
    <property type="evidence" value="ECO:0007669"/>
    <property type="project" value="UniProtKB-KW"/>
</dbReference>
<dbReference type="GO" id="GO:0019464">
    <property type="term" value="P:glycine decarboxylation via glycine cleavage system"/>
    <property type="evidence" value="ECO:0007669"/>
    <property type="project" value="UniProtKB-UniRule"/>
</dbReference>
<dbReference type="FunFam" id="2.40.30.110:FF:000003">
    <property type="entry name" value="Aminomethyltransferase"/>
    <property type="match status" value="1"/>
</dbReference>
<dbReference type="FunFam" id="3.30.70.1400:FF:000001">
    <property type="entry name" value="Aminomethyltransferase"/>
    <property type="match status" value="1"/>
</dbReference>
<dbReference type="FunFam" id="4.10.1250.10:FF:000001">
    <property type="entry name" value="Aminomethyltransferase"/>
    <property type="match status" value="1"/>
</dbReference>
<dbReference type="Gene3D" id="2.40.30.110">
    <property type="entry name" value="Aminomethyltransferase beta-barrel domains"/>
    <property type="match status" value="1"/>
</dbReference>
<dbReference type="Gene3D" id="3.30.70.1400">
    <property type="entry name" value="Aminomethyltransferase beta-barrel domains"/>
    <property type="match status" value="1"/>
</dbReference>
<dbReference type="Gene3D" id="4.10.1250.10">
    <property type="entry name" value="Aminomethyltransferase fragment"/>
    <property type="match status" value="1"/>
</dbReference>
<dbReference type="Gene3D" id="3.30.1360.120">
    <property type="entry name" value="Probable tRNA modification gtpase trme, domain 1"/>
    <property type="match status" value="1"/>
</dbReference>
<dbReference type="HAMAP" id="MF_00259">
    <property type="entry name" value="GcvT"/>
    <property type="match status" value="1"/>
</dbReference>
<dbReference type="InterPro" id="IPR006223">
    <property type="entry name" value="GCS_T"/>
</dbReference>
<dbReference type="InterPro" id="IPR022903">
    <property type="entry name" value="GCS_T_bac"/>
</dbReference>
<dbReference type="InterPro" id="IPR013977">
    <property type="entry name" value="GCST_C"/>
</dbReference>
<dbReference type="InterPro" id="IPR006222">
    <property type="entry name" value="GCV_T_N"/>
</dbReference>
<dbReference type="InterPro" id="IPR028896">
    <property type="entry name" value="GcvT/YgfZ/DmdA"/>
</dbReference>
<dbReference type="InterPro" id="IPR029043">
    <property type="entry name" value="GcvT/YgfZ_C"/>
</dbReference>
<dbReference type="InterPro" id="IPR027266">
    <property type="entry name" value="TrmE/GcvT_dom1"/>
</dbReference>
<dbReference type="NCBIfam" id="TIGR00528">
    <property type="entry name" value="gcvT"/>
    <property type="match status" value="1"/>
</dbReference>
<dbReference type="NCBIfam" id="NF001567">
    <property type="entry name" value="PRK00389.1"/>
    <property type="match status" value="1"/>
</dbReference>
<dbReference type="PANTHER" id="PTHR43757">
    <property type="entry name" value="AMINOMETHYLTRANSFERASE"/>
    <property type="match status" value="1"/>
</dbReference>
<dbReference type="PANTHER" id="PTHR43757:SF2">
    <property type="entry name" value="AMINOMETHYLTRANSFERASE, MITOCHONDRIAL"/>
    <property type="match status" value="1"/>
</dbReference>
<dbReference type="Pfam" id="PF01571">
    <property type="entry name" value="GCV_T"/>
    <property type="match status" value="1"/>
</dbReference>
<dbReference type="Pfam" id="PF08669">
    <property type="entry name" value="GCV_T_C"/>
    <property type="match status" value="1"/>
</dbReference>
<dbReference type="PIRSF" id="PIRSF006487">
    <property type="entry name" value="GcvT"/>
    <property type="match status" value="1"/>
</dbReference>
<dbReference type="SUPFAM" id="SSF101790">
    <property type="entry name" value="Aminomethyltransferase beta-barrel domain"/>
    <property type="match status" value="1"/>
</dbReference>
<dbReference type="SUPFAM" id="SSF103025">
    <property type="entry name" value="Folate-binding domain"/>
    <property type="match status" value="1"/>
</dbReference>